<gene>
    <name evidence="1" type="primary">hutH</name>
    <name type="ordered locus">TDE_0588</name>
</gene>
<feature type="chain" id="PRO_0000161045" description="Histidine ammonia-lyase">
    <location>
        <begin position="1"/>
        <end position="507"/>
    </location>
</feature>
<feature type="modified residue" description="2,3-didehydroalanine (Ser)" evidence="1">
    <location>
        <position position="146"/>
    </location>
</feature>
<feature type="cross-link" description="5-imidazolinone (Ala-Gly)" evidence="1">
    <location>
        <begin position="145"/>
        <end position="147"/>
    </location>
</feature>
<protein>
    <recommendedName>
        <fullName evidence="1">Histidine ammonia-lyase</fullName>
        <shortName evidence="1">Histidase</shortName>
        <ecNumber evidence="1">4.3.1.3</ecNumber>
    </recommendedName>
</protein>
<keyword id="KW-0963">Cytoplasm</keyword>
<keyword id="KW-0369">Histidine metabolism</keyword>
<keyword id="KW-0456">Lyase</keyword>
<keyword id="KW-1185">Reference proteome</keyword>
<name>HUTH_TREDE</name>
<evidence type="ECO:0000255" key="1">
    <source>
        <dbReference type="HAMAP-Rule" id="MF_00229"/>
    </source>
</evidence>
<sequence>MKVKPVTVTGSSLTIEDVVAVARHGAEVKLSADAKKRIKDSKKIVDDIVKSGKPTYGISTGFGELSTVTITKDQNGALQRNLILSHACGVGNPFPEDIVRAIMLLRLNTHASGFSGVTPSVPDILVDMLNKGVIPYVPEKGSLGASGDLANLAHIALVMIGEGKAYYEGKLMEGKAALAKAGLKPVVLSGKDGLGIINGTPVMSGIGALALHDAEQLLKAANMGASLVFEAFRGITAALDPRIHKSRPHKGQIDTAAFILKMLKGSSSINTRENDVQDPYTLRCVPQVHGASADAIAYVRKVLEIEINAVTDNPLVFPDNHDVISGGNFHGQPIAITMDFLGIAVSELANISERRIERLVNPQLNGGLPAFLIENGGVNSGFMIPQYTAASLVSENKVLAHPASVDSITSSGNKEDHVSMGTTAARKITEIVKNVRHVLAIEWLTAAQACDLRGVKKYGKGTGEMMKLIRKHISKVTEDRILYNDIMKALEIISNDENIDMIENAAK</sequence>
<proteinExistence type="inferred from homology"/>
<organism>
    <name type="scientific">Treponema denticola (strain ATCC 35405 / DSM 14222 / CIP 103919 / JCM 8153 / KCTC 15104)</name>
    <dbReference type="NCBI Taxonomy" id="243275"/>
    <lineage>
        <taxon>Bacteria</taxon>
        <taxon>Pseudomonadati</taxon>
        <taxon>Spirochaetota</taxon>
        <taxon>Spirochaetia</taxon>
        <taxon>Spirochaetales</taxon>
        <taxon>Treponemataceae</taxon>
        <taxon>Treponema</taxon>
    </lineage>
</organism>
<accession>Q73Q56</accession>
<comment type="catalytic activity">
    <reaction evidence="1">
        <text>L-histidine = trans-urocanate + NH4(+)</text>
        <dbReference type="Rhea" id="RHEA:21232"/>
        <dbReference type="ChEBI" id="CHEBI:17771"/>
        <dbReference type="ChEBI" id="CHEBI:28938"/>
        <dbReference type="ChEBI" id="CHEBI:57595"/>
        <dbReference type="EC" id="4.3.1.3"/>
    </reaction>
</comment>
<comment type="pathway">
    <text evidence="1">Amino-acid degradation; L-histidine degradation into L-glutamate; N-formimidoyl-L-glutamate from L-histidine: step 1/3.</text>
</comment>
<comment type="subcellular location">
    <subcellularLocation>
        <location evidence="1">Cytoplasm</location>
    </subcellularLocation>
</comment>
<comment type="PTM">
    <text evidence="1">Contains an active site 4-methylidene-imidazol-5-one (MIO), which is formed autocatalytically by cyclization and dehydration of residues Ala-Ser-Gly.</text>
</comment>
<comment type="similarity">
    <text evidence="1">Belongs to the PAL/histidase family.</text>
</comment>
<dbReference type="EC" id="4.3.1.3" evidence="1"/>
<dbReference type="EMBL" id="AE017226">
    <property type="protein sequence ID" value="AAS11083.1"/>
    <property type="molecule type" value="Genomic_DNA"/>
</dbReference>
<dbReference type="RefSeq" id="NP_971202.1">
    <property type="nucleotide sequence ID" value="NC_002967.9"/>
</dbReference>
<dbReference type="RefSeq" id="WP_002681759.1">
    <property type="nucleotide sequence ID" value="NC_002967.9"/>
</dbReference>
<dbReference type="SMR" id="Q73Q56"/>
<dbReference type="STRING" id="243275.TDE_0588"/>
<dbReference type="PaxDb" id="243275-TDE_0588"/>
<dbReference type="GeneID" id="2741551"/>
<dbReference type="KEGG" id="tde:TDE_0588"/>
<dbReference type="PATRIC" id="fig|243275.7.peg.568"/>
<dbReference type="eggNOG" id="COG2986">
    <property type="taxonomic scope" value="Bacteria"/>
</dbReference>
<dbReference type="HOGENOM" id="CLU_014801_4_0_12"/>
<dbReference type="OrthoDB" id="9806955at2"/>
<dbReference type="UniPathway" id="UPA00379">
    <property type="reaction ID" value="UER00549"/>
</dbReference>
<dbReference type="Proteomes" id="UP000008212">
    <property type="component" value="Chromosome"/>
</dbReference>
<dbReference type="GO" id="GO:0005737">
    <property type="term" value="C:cytoplasm"/>
    <property type="evidence" value="ECO:0007669"/>
    <property type="project" value="UniProtKB-SubCell"/>
</dbReference>
<dbReference type="GO" id="GO:0004397">
    <property type="term" value="F:histidine ammonia-lyase activity"/>
    <property type="evidence" value="ECO:0007669"/>
    <property type="project" value="UniProtKB-UniRule"/>
</dbReference>
<dbReference type="GO" id="GO:0019556">
    <property type="term" value="P:L-histidine catabolic process to glutamate and formamide"/>
    <property type="evidence" value="ECO:0007669"/>
    <property type="project" value="UniProtKB-UniPathway"/>
</dbReference>
<dbReference type="GO" id="GO:0019557">
    <property type="term" value="P:L-histidine catabolic process to glutamate and formate"/>
    <property type="evidence" value="ECO:0007669"/>
    <property type="project" value="UniProtKB-UniPathway"/>
</dbReference>
<dbReference type="CDD" id="cd00332">
    <property type="entry name" value="PAL-HAL"/>
    <property type="match status" value="1"/>
</dbReference>
<dbReference type="FunFam" id="1.10.275.10:FF:000005">
    <property type="entry name" value="Histidine ammonia-lyase"/>
    <property type="match status" value="1"/>
</dbReference>
<dbReference type="FunFam" id="1.20.200.10:FF:000003">
    <property type="entry name" value="Histidine ammonia-lyase"/>
    <property type="match status" value="1"/>
</dbReference>
<dbReference type="Gene3D" id="1.20.200.10">
    <property type="entry name" value="Fumarase/aspartase (Central domain)"/>
    <property type="match status" value="1"/>
</dbReference>
<dbReference type="Gene3D" id="1.10.275.10">
    <property type="entry name" value="Fumarase/aspartase (N-terminal domain)"/>
    <property type="match status" value="1"/>
</dbReference>
<dbReference type="HAMAP" id="MF_00229">
    <property type="entry name" value="His_ammonia_lyase"/>
    <property type="match status" value="1"/>
</dbReference>
<dbReference type="InterPro" id="IPR001106">
    <property type="entry name" value="Aromatic_Lyase"/>
</dbReference>
<dbReference type="InterPro" id="IPR024083">
    <property type="entry name" value="Fumarase/histidase_N"/>
</dbReference>
<dbReference type="InterPro" id="IPR005921">
    <property type="entry name" value="HutH"/>
</dbReference>
<dbReference type="InterPro" id="IPR008948">
    <property type="entry name" value="L-Aspartase-like"/>
</dbReference>
<dbReference type="InterPro" id="IPR022313">
    <property type="entry name" value="Phe/His_NH3-lyase_AS"/>
</dbReference>
<dbReference type="NCBIfam" id="TIGR01225">
    <property type="entry name" value="hutH"/>
    <property type="match status" value="1"/>
</dbReference>
<dbReference type="NCBIfam" id="NF006871">
    <property type="entry name" value="PRK09367.1"/>
    <property type="match status" value="1"/>
</dbReference>
<dbReference type="PANTHER" id="PTHR10362">
    <property type="entry name" value="HISTIDINE AMMONIA-LYASE"/>
    <property type="match status" value="1"/>
</dbReference>
<dbReference type="Pfam" id="PF00221">
    <property type="entry name" value="Lyase_aromatic"/>
    <property type="match status" value="1"/>
</dbReference>
<dbReference type="SUPFAM" id="SSF48557">
    <property type="entry name" value="L-aspartase-like"/>
    <property type="match status" value="1"/>
</dbReference>
<dbReference type="PROSITE" id="PS00488">
    <property type="entry name" value="PAL_HISTIDASE"/>
    <property type="match status" value="1"/>
</dbReference>
<reference key="1">
    <citation type="journal article" date="2004" name="Proc. Natl. Acad. Sci. U.S.A.">
        <title>Comparison of the genome of the oral pathogen Treponema denticola with other spirochete genomes.</title>
        <authorList>
            <person name="Seshadri R."/>
            <person name="Myers G.S.A."/>
            <person name="Tettelin H."/>
            <person name="Eisen J.A."/>
            <person name="Heidelberg J.F."/>
            <person name="Dodson R.J."/>
            <person name="Davidsen T.M."/>
            <person name="DeBoy R.T."/>
            <person name="Fouts D.E."/>
            <person name="Haft D.H."/>
            <person name="Selengut J."/>
            <person name="Ren Q."/>
            <person name="Brinkac L.M."/>
            <person name="Madupu R."/>
            <person name="Kolonay J.F."/>
            <person name="Durkin S.A."/>
            <person name="Daugherty S.C."/>
            <person name="Shetty J."/>
            <person name="Shvartsbeyn A."/>
            <person name="Gebregeorgis E."/>
            <person name="Geer K."/>
            <person name="Tsegaye G."/>
            <person name="Malek J.A."/>
            <person name="Ayodeji B."/>
            <person name="Shatsman S."/>
            <person name="McLeod M.P."/>
            <person name="Smajs D."/>
            <person name="Howell J.K."/>
            <person name="Pal S."/>
            <person name="Amin A."/>
            <person name="Vashisth P."/>
            <person name="McNeill T.Z."/>
            <person name="Xiang Q."/>
            <person name="Sodergren E."/>
            <person name="Baca E."/>
            <person name="Weinstock G.M."/>
            <person name="Norris S.J."/>
            <person name="Fraser C.M."/>
            <person name="Paulsen I.T."/>
        </authorList>
    </citation>
    <scope>NUCLEOTIDE SEQUENCE [LARGE SCALE GENOMIC DNA]</scope>
    <source>
        <strain>ATCC 35405 / DSM 14222 / CIP 103919 / JCM 8153 / KCTC 15104</strain>
    </source>
</reference>